<organism>
    <name type="scientific">Escherichia coli (strain TW11681)</name>
    <dbReference type="NCBI Taxonomy" id="913088"/>
    <lineage>
        <taxon>Bacteria</taxon>
        <taxon>Pseudomonadati</taxon>
        <taxon>Pseudomonadota</taxon>
        <taxon>Gammaproteobacteria</taxon>
        <taxon>Enterobacterales</taxon>
        <taxon>Enterobacteriaceae</taxon>
        <taxon>Escherichia</taxon>
    </lineage>
</organism>
<keyword id="KW-0002">3D-structure</keyword>
<keyword id="KW-0051">Antiviral defense</keyword>
<keyword id="KW-0067">ATP-binding</keyword>
<keyword id="KW-0342">GTP-binding</keyword>
<keyword id="KW-1017">Isopeptide bond</keyword>
<keyword id="KW-0460">Magnesium</keyword>
<keyword id="KW-0479">Metal-binding</keyword>
<keyword id="KW-0546">Nucleotide metabolism</keyword>
<keyword id="KW-0547">Nucleotide-binding</keyword>
<keyword id="KW-0548">Nucleotidyltransferase</keyword>
<keyword id="KW-0882">Thioester bond</keyword>
<keyword id="KW-0808">Transferase</keyword>
<feature type="chain" id="PRO_0000451855" description="Cyclic GMP-AMP synthase">
    <location>
        <begin position="1"/>
        <end position="432"/>
    </location>
</feature>
<feature type="binding site" evidence="2">
    <location>
        <begin position="110"/>
        <end position="115"/>
    </location>
    <ligand>
        <name>GTP</name>
        <dbReference type="ChEBI" id="CHEBI:37565"/>
    </ligand>
</feature>
<feature type="binding site" evidence="2">
    <location>
        <position position="129"/>
    </location>
    <ligand>
        <name>Mg(2+)</name>
        <dbReference type="ChEBI" id="CHEBI:18420"/>
        <note>catalytic</note>
    </ligand>
</feature>
<feature type="binding site" evidence="2">
    <location>
        <position position="131"/>
    </location>
    <ligand>
        <name>Mg(2+)</name>
        <dbReference type="ChEBI" id="CHEBI:18420"/>
        <note>catalytic</note>
    </ligand>
</feature>
<feature type="binding site" evidence="2">
    <location>
        <position position="180"/>
    </location>
    <ligand>
        <name>ATP</name>
        <dbReference type="ChEBI" id="CHEBI:30616"/>
    </ligand>
</feature>
<feature type="binding site" evidence="2">
    <location>
        <position position="191"/>
    </location>
    <ligand>
        <name>Mg(2+)</name>
        <dbReference type="ChEBI" id="CHEBI:18420"/>
        <note>catalytic</note>
    </ligand>
</feature>
<feature type="binding site" evidence="2">
    <location>
        <position position="255"/>
    </location>
    <ligand>
        <name>ATP</name>
        <dbReference type="ChEBI" id="CHEBI:30616"/>
    </ligand>
</feature>
<feature type="binding site" evidence="2">
    <location>
        <position position="283"/>
    </location>
    <ligand>
        <name>GTP</name>
        <dbReference type="ChEBI" id="CHEBI:37565"/>
    </ligand>
</feature>
<feature type="binding site" evidence="2">
    <location>
        <position position="297"/>
    </location>
    <ligand>
        <name>GTP</name>
        <dbReference type="ChEBI" id="CHEBI:37565"/>
    </ligand>
</feature>
<feature type="binding site" evidence="2">
    <location>
        <position position="344"/>
    </location>
    <ligand>
        <name>GTP</name>
        <dbReference type="ChEBI" id="CHEBI:37565"/>
    </ligand>
</feature>
<feature type="cross-link" description="Glycyl cysteine dithioester (Gly-Cys) (interchain with C-13 in Cap2)" evidence="4">
    <location>
        <position position="432"/>
    </location>
</feature>
<feature type="cross-link" description="Glycyl cysteine dithioester (Gly-Cys) (interchain with C-493 in Cap2)" evidence="4">
    <location>
        <position position="432"/>
    </location>
</feature>
<feature type="cross-link" description="Glycyl cysteine dithioester (Gly-Cys) (interchain with C-513 in Cap2)" evidence="4">
    <location>
        <position position="432"/>
    </location>
</feature>
<feature type="cross-link" description="Glycyl lysine isopeptide (Gly-Lys) (interchain with K-? in acceptor proteins)" evidence="4">
    <location>
        <position position="432"/>
    </location>
</feature>
<feature type="mutagenesis site" description="Loss of defense against all phage tested." evidence="3 4">
    <original>DID</original>
    <variation>AIA</variation>
    <location>
        <begin position="129"/>
        <end position="131"/>
    </location>
</feature>
<feature type="mutagenesis site" description="Reduced conjugation to cellular proteins, increased thioester bond in Cap2, no change in phage protection, slight decrease in cGAMP production in vivo during T4 infection." evidence="4">
    <original>G</original>
    <variation>A</variation>
    <location>
        <position position="432"/>
    </location>
</feature>
<feature type="mutagenesis site" description="No longer conjugated to cellular proteins, loss of defense against phage T4 but not P1." evidence="4">
    <original>G</original>
    <variation>S</variation>
    <variation>V</variation>
    <variation>R</variation>
    <variation>W</variation>
    <location>
        <position position="432"/>
    </location>
</feature>
<feature type="mutagenesis site" description="No longer conjugated to cellular proteins, loss of defense against phage T4, T5, T6, lambda, but not T2 or P1, no cGAMP production in vivo during T4 infection." evidence="4">
    <location>
        <position position="432"/>
    </location>
</feature>
<comment type="function">
    <text evidence="3 4 7">Cyclic nucleotide synthase (second messenger synthase) of a CBASS antivirus system (PubMed:36848932). CBASS (cyclic oligonucleotide-based antiphage signaling system) provides immunity against bacteriophages. The CD-NTase protein (DncV, this protein) synthesizes cyclic nucleotides in response to infection; these serve as specific second messenger signals. The signals activate a diverse range of effectors, leading to bacterial cell death and thus abortive phage infection (PubMed:31533127, PubMed:36848932). A type II-A(GA) CBASS system (PubMed:32839535).</text>
</comment>
<comment type="function">
    <text evidence="2 4">Catalyzes the synthesis of 3',3'-cyclic GMP-AMP (cGAMP) from GTP and ATP, a second messenger in cell signal transduction (PubMed:36848932). Its product controls the activity of cGAMP-activated phospholipase CapV, a patatin-like lipase that is a direct cGAMP receptor encoded in the dncV operon.</text>
</comment>
<comment type="function">
    <text evidence="3 4">Protects E.coli against phage infection (PubMed:31533127, PubMed:36848932). When capV and dncV are introduced in E.coli MG1655 there is 1000-fold protection against phage P1; protection against other phage (T2, T4, T5, T6 and lambda-vir) requires the 2 subsequent genes (cap2 and cap3) (PubMed:31533127). In another paper the capV-dncV-cap2-cap3 operon gives 10(4)-10(5)-fold protection against phages lambda, T2, T4 and T6, about 1000-fold protection against P1 and 10-fold protection against T5 (PubMed:36848932).</text>
</comment>
<comment type="catalytic activity">
    <reaction evidence="4">
        <text>GTP + ATP = 3',3'-cGAMP + 2 diphosphate</text>
        <dbReference type="Rhea" id="RHEA:35647"/>
        <dbReference type="ChEBI" id="CHEBI:30616"/>
        <dbReference type="ChEBI" id="CHEBI:33019"/>
        <dbReference type="ChEBI" id="CHEBI:37565"/>
        <dbReference type="ChEBI" id="CHEBI:71501"/>
    </reaction>
    <physiologicalReaction direction="left-to-right" evidence="4">
        <dbReference type="Rhea" id="RHEA:35648"/>
    </physiologicalReaction>
</comment>
<comment type="cofactor">
    <cofactor evidence="2">
        <name>Mg(2+)</name>
        <dbReference type="ChEBI" id="CHEBI:18420"/>
    </cofactor>
    <text evidence="2">Binds 1 Mg(2+) ion per subunit.</text>
</comment>
<comment type="activity regulation">
    <text evidence="2 4">Primed for activation by Cap2 which conjugates it to cellular proteins (By similarity). cGAMP production is induced in phage T4 infected cells in a manner that requires Cap2 and Cap3, as well as a C-terminal Ala or Gly residue in this protein (PubMed:36848932).</text>
</comment>
<comment type="subunit">
    <text evidence="1">A Cap2 dimer is bound on either side by a DncV monomer.</text>
</comment>
<comment type="induction">
    <text evidence="10">Part of a CBASS operon consisting of capV-dncV-cap2-cap3.</text>
</comment>
<comment type="PTM">
    <text evidence="4">In bacteria expressing capV-dncV-cap2-cap3, this protein is conjugated to about 130 cellular proteins by Cap2, most of which are involved in metabolism; more conjugated protein is found in the absence of Cap3 (PubMed:36848932). Most conjugation occurs via an isopeptide bond with the epsilon-amine of Lys on the target protein, but Cys-conjugation also occurs, including to Cap2 (PubMed:36848932). Conjugation or deconjugation from cellular proteins does not change the DncV activity in vitro, but does so in vivo during infection (PubMed:36848932).</text>
</comment>
<comment type="PTM">
    <text evidence="4">(Microbial infection) During phage T4 infection is conjugated to at least 2 T4 proteins (fibritin (wac) and dexA.2) (PubMed:36848932).</text>
</comment>
<comment type="similarity">
    <text evidence="9">Belongs to the CD-NTase family. A02 subfamily.</text>
</comment>
<comment type="online information" name="Protein Spotlight">
    <link uri="https://www.proteinspotlight.org/back_issues/239/"/>
    <text>Small sacrifice - Issue 239 of September 2021</text>
</comment>
<protein>
    <recommendedName>
        <fullName evidence="8">Cyclic GMP-AMP synthase</fullName>
        <shortName>c-GAMP synthase</shortName>
        <shortName evidence="6">cGAS</shortName>
        <ecNumber evidence="4">2.7.7.-</ecNumber>
    </recommendedName>
    <alternativeName>
        <fullName evidence="2">3',3'-cGAMP synthase</fullName>
    </alternativeName>
    <alternativeName>
        <fullName evidence="2">Dinucleotide cyclase DncV</fullName>
        <shortName evidence="5">CD-NTase</shortName>
    </alternativeName>
</protein>
<reference key="1">
    <citation type="journal article" date="2011" name="Infect. Immun.">
        <title>A comparative genomic analysis of diverse clonal types of enterotoxigenic Escherichia coli reveals pathovar-specific conservation.</title>
        <authorList>
            <person name="Sahl J.W."/>
            <person name="Steinsland H."/>
            <person name="Redman J.C."/>
            <person name="Angiuoli S.V."/>
            <person name="Nataro J.P."/>
            <person name="Sommerfelt H."/>
            <person name="Rasko D.A."/>
        </authorList>
    </citation>
    <scope>NUCLEOTIDE SEQUENCE [LARGE SCALE GENOMIC DNA]</scope>
    <source>
        <strain>TW11681</strain>
    </source>
</reference>
<reference key="2">
    <citation type="journal article" date="2019" name="Nature">
        <title>Bacterial cGAS-like enzymes synthesize diverse nucleotide signals.</title>
        <authorList>
            <person name="Whiteley A.T."/>
            <person name="Eaglesham J.B."/>
            <person name="de Oliveira Mann C.C."/>
            <person name="Morehouse B.R."/>
            <person name="Lowey B."/>
            <person name="Nieminen E.A."/>
            <person name="Danilchanka O."/>
            <person name="King D.S."/>
            <person name="Lee A.S.Y."/>
            <person name="Mekalanos J.J."/>
            <person name="Kranzusch P.J."/>
        </authorList>
    </citation>
    <scope>NOMENCLATURE</scope>
    <scope>SIMILARITY</scope>
    <source>
        <strain>TW11681</strain>
    </source>
</reference>
<reference key="3">
    <citation type="journal article" date="2019" name="Nature">
        <title>Cyclic GMP-AMP signalling protects bacteria against viral infection.</title>
        <authorList>
            <person name="Cohen D."/>
            <person name="Melamed S."/>
            <person name="Millman A."/>
            <person name="Shulman G."/>
            <person name="Oppenheimer-Shaanan Y."/>
            <person name="Kacen A."/>
            <person name="Doron S."/>
            <person name="Amitai G."/>
            <person name="Sorek R."/>
        </authorList>
    </citation>
    <scope>ANTIVIRAL DEFENSE</scope>
    <scope>NOMENCLATURE</scope>
    <scope>OPERON STRUCTURE</scope>
    <scope>MUTAGENESIS OF 129-ASP--ASP-131</scope>
    <source>
        <strain>TW11681</strain>
    </source>
</reference>
<reference key="4">
    <citation type="journal article" date="2020" name="Nat. Microbiol.">
        <title>Diversity and classification of cyclic-oligonucleotide-based anti-phage signalling systems.</title>
        <authorList>
            <person name="Millman A."/>
            <person name="Melamed S."/>
            <person name="Amitai G."/>
            <person name="Sorek R."/>
        </authorList>
    </citation>
    <scope>CLASSIFICATION AND NOMENCLATURE</scope>
</reference>
<reference key="5">
    <citation type="journal article" date="2023" name="Nature">
        <title>Ubiquitin-like conjugation by bacterial cGAS enhances anti-phage defence.</title>
        <authorList>
            <person name="Jenson J.M."/>
            <person name="Li T."/>
            <person name="Du F."/>
            <person name="Ea C.K."/>
            <person name="Chen Z.J."/>
        </authorList>
    </citation>
    <scope>FUNCTION IN CGAMP SYNTHESIS</scope>
    <scope>CATALYTIC ACTIVITY</scope>
    <scope>ANTIVIRAL DEFENSE</scope>
    <scope>ACTIVITY REGULATION</scope>
    <scope>CONJUGATION TO CELLULAR PROTEINS</scope>
    <scope>MUTAGENESIS OF 129-ASP--ASP-131 AND GLY-432</scope>
    <source>
        <strain>TW11681</strain>
    </source>
</reference>
<dbReference type="EC" id="2.7.7.-" evidence="4"/>
<dbReference type="EMBL" id="AELD01000001">
    <property type="status" value="NOT_ANNOTATED_CDS"/>
    <property type="molecule type" value="Genomic_DNA"/>
</dbReference>
<dbReference type="RefSeq" id="WP_000558641.1">
    <property type="nucleotide sequence ID" value="NZ_CP035855.1"/>
</dbReference>
<dbReference type="PDB" id="9ILD">
    <property type="method" value="X-ray"/>
    <property type="resolution" value="2.18 A"/>
    <property type="chains" value="B=406-432"/>
</dbReference>
<dbReference type="PDBsum" id="9ILD"/>
<dbReference type="SMR" id="P0DTF0"/>
<dbReference type="GO" id="GO:0140701">
    <property type="term" value="F:3',3'-cyclic GMP-AMP synthase activity"/>
    <property type="evidence" value="ECO:0000250"/>
    <property type="project" value="UniProtKB"/>
</dbReference>
<dbReference type="GO" id="GO:0005524">
    <property type="term" value="F:ATP binding"/>
    <property type="evidence" value="ECO:0007669"/>
    <property type="project" value="UniProtKB-KW"/>
</dbReference>
<dbReference type="GO" id="GO:0005525">
    <property type="term" value="F:GTP binding"/>
    <property type="evidence" value="ECO:0007669"/>
    <property type="project" value="UniProtKB-KW"/>
</dbReference>
<dbReference type="GO" id="GO:0046872">
    <property type="term" value="F:metal ion binding"/>
    <property type="evidence" value="ECO:0007669"/>
    <property type="project" value="UniProtKB-KW"/>
</dbReference>
<dbReference type="GO" id="GO:0051607">
    <property type="term" value="P:defense response to virus"/>
    <property type="evidence" value="ECO:0007669"/>
    <property type="project" value="UniProtKB-KW"/>
</dbReference>
<dbReference type="GO" id="GO:0009117">
    <property type="term" value="P:nucleotide metabolic process"/>
    <property type="evidence" value="ECO:0007669"/>
    <property type="project" value="UniProtKB-KW"/>
</dbReference>
<dbReference type="InterPro" id="IPR048445">
    <property type="entry name" value="DncV-like_NTFase"/>
</dbReference>
<dbReference type="InterPro" id="IPR048446">
    <property type="entry name" value="DncV_C"/>
</dbReference>
<dbReference type="InterPro" id="IPR047805">
    <property type="entry name" value="GAMP_synthase"/>
</dbReference>
<dbReference type="NCBIfam" id="NF041078">
    <property type="entry name" value="cGAS"/>
    <property type="match status" value="1"/>
</dbReference>
<dbReference type="Pfam" id="PF21654">
    <property type="entry name" value="DncV-like_NTFase"/>
    <property type="match status" value="1"/>
</dbReference>
<dbReference type="Pfam" id="PF21713">
    <property type="entry name" value="DncV_C"/>
    <property type="match status" value="1"/>
</dbReference>
<proteinExistence type="evidence at protein level"/>
<name>DNCV2_ECOTW</name>
<evidence type="ECO:0000250" key="1">
    <source>
        <dbReference type="UniProtKB" id="P0DSP4"/>
    </source>
</evidence>
<evidence type="ECO:0000250" key="2">
    <source>
        <dbReference type="UniProtKB" id="Q9KVG7"/>
    </source>
</evidence>
<evidence type="ECO:0000269" key="3">
    <source>
    </source>
</evidence>
<evidence type="ECO:0000269" key="4">
    <source>
    </source>
</evidence>
<evidence type="ECO:0000303" key="5">
    <source>
    </source>
</evidence>
<evidence type="ECO:0000303" key="6">
    <source>
    </source>
</evidence>
<evidence type="ECO:0000303" key="7">
    <source>
    </source>
</evidence>
<evidence type="ECO:0000303" key="8">
    <source>
    </source>
</evidence>
<evidence type="ECO:0000305" key="9">
    <source>
    </source>
</evidence>
<evidence type="ECO:0000305" key="10">
    <source>
    </source>
</evidence>
<sequence length="432" mass="49317">MHWDLNNYYSNNMDGLISKLKLSKTESTKLKELRQIVRERTRDVFKEARAVAADVKKHTLTLEGVRLKLGQTNVRYLSTADQAEVARLIFEMDDDARNDFINLQPRFWTQGSFQYDTLNKPFQPGQEMDIDDGTYMPMTVFESEPRIGHTLLLLLVDTSLKSLEAENDGWRFEEKNTCGRIKIPHEKTHIDVPMYAIPKNQFQTKQTAADSAHILKSESIFESVALNRDSREAYLVESDKVNLALREGAKRWSISDPKIVEDWFNDSCKRIGGHVRSICRFMKAWRDAQWDVGGPSSISLMTAVVNILNREEHNDSDLAGTMKLVAKLLPDEFNRGLESPDDTDTKLLFPAEWDQNVHQKTIVETMKTLYEILVDAENANTREDALHKMNEAFGKRVTNAQLITSIAAAPAFHVSPSREPEPRKINKTMVSG</sequence>
<gene>
    <name evidence="6" type="primary">dncV</name>
    <name type="ORF">ESG_RS0100135</name>
</gene>
<accession>P0DTF0</accession>